<feature type="chain" id="PRO_1000002655" description="UDP-N-acetylglucosamine--N-acetylmuramyl-(pentapeptide) pyrophosphoryl-undecaprenol N-acetylglucosamine transferase">
    <location>
        <begin position="1"/>
        <end position="353"/>
    </location>
</feature>
<feature type="binding site" evidence="1">
    <location>
        <begin position="10"/>
        <end position="12"/>
    </location>
    <ligand>
        <name>UDP-N-acetyl-alpha-D-glucosamine</name>
        <dbReference type="ChEBI" id="CHEBI:57705"/>
    </ligand>
</feature>
<feature type="binding site" evidence="1">
    <location>
        <position position="124"/>
    </location>
    <ligand>
        <name>UDP-N-acetyl-alpha-D-glucosamine</name>
        <dbReference type="ChEBI" id="CHEBI:57705"/>
    </ligand>
</feature>
<feature type="binding site" evidence="1">
    <location>
        <position position="183"/>
    </location>
    <ligand>
        <name>UDP-N-acetyl-alpha-D-glucosamine</name>
        <dbReference type="ChEBI" id="CHEBI:57705"/>
    </ligand>
</feature>
<feature type="binding site" evidence="1">
    <location>
        <position position="283"/>
    </location>
    <ligand>
        <name>UDP-N-acetyl-alpha-D-glucosamine</name>
        <dbReference type="ChEBI" id="CHEBI:57705"/>
    </ligand>
</feature>
<organism>
    <name type="scientific">Helicobacter acinonychis (strain Sheeba)</name>
    <dbReference type="NCBI Taxonomy" id="382638"/>
    <lineage>
        <taxon>Bacteria</taxon>
        <taxon>Pseudomonadati</taxon>
        <taxon>Campylobacterota</taxon>
        <taxon>Epsilonproteobacteria</taxon>
        <taxon>Campylobacterales</taxon>
        <taxon>Helicobacteraceae</taxon>
        <taxon>Helicobacter</taxon>
    </lineage>
</organism>
<accession>Q17WB5</accession>
<keyword id="KW-0131">Cell cycle</keyword>
<keyword id="KW-0132">Cell division</keyword>
<keyword id="KW-0997">Cell inner membrane</keyword>
<keyword id="KW-1003">Cell membrane</keyword>
<keyword id="KW-0133">Cell shape</keyword>
<keyword id="KW-0961">Cell wall biogenesis/degradation</keyword>
<keyword id="KW-0328">Glycosyltransferase</keyword>
<keyword id="KW-0472">Membrane</keyword>
<keyword id="KW-0573">Peptidoglycan synthesis</keyword>
<keyword id="KW-0808">Transferase</keyword>
<comment type="function">
    <text evidence="1">Cell wall formation. Catalyzes the transfer of a GlcNAc subunit on undecaprenyl-pyrophosphoryl-MurNAc-pentapeptide (lipid intermediate I) to form undecaprenyl-pyrophosphoryl-MurNAc-(pentapeptide)GlcNAc (lipid intermediate II).</text>
</comment>
<comment type="catalytic activity">
    <reaction evidence="1">
        <text>di-trans,octa-cis-undecaprenyl diphospho-N-acetyl-alpha-D-muramoyl-L-alanyl-D-glutamyl-meso-2,6-diaminopimeloyl-D-alanyl-D-alanine + UDP-N-acetyl-alpha-D-glucosamine = di-trans,octa-cis-undecaprenyl diphospho-[N-acetyl-alpha-D-glucosaminyl-(1-&gt;4)]-N-acetyl-alpha-D-muramoyl-L-alanyl-D-glutamyl-meso-2,6-diaminopimeloyl-D-alanyl-D-alanine + UDP + H(+)</text>
        <dbReference type="Rhea" id="RHEA:31227"/>
        <dbReference type="ChEBI" id="CHEBI:15378"/>
        <dbReference type="ChEBI" id="CHEBI:57705"/>
        <dbReference type="ChEBI" id="CHEBI:58223"/>
        <dbReference type="ChEBI" id="CHEBI:61387"/>
        <dbReference type="ChEBI" id="CHEBI:61388"/>
        <dbReference type="EC" id="2.4.1.227"/>
    </reaction>
</comment>
<comment type="pathway">
    <text evidence="1">Cell wall biogenesis; peptidoglycan biosynthesis.</text>
</comment>
<comment type="subcellular location">
    <subcellularLocation>
        <location evidence="1">Cell inner membrane</location>
        <topology evidence="1">Peripheral membrane protein</topology>
        <orientation evidence="1">Cytoplasmic side</orientation>
    </subcellularLocation>
</comment>
<comment type="similarity">
    <text evidence="1">Belongs to the glycosyltransferase 28 family. MurG subfamily.</text>
</comment>
<protein>
    <recommendedName>
        <fullName evidence="1">UDP-N-acetylglucosamine--N-acetylmuramyl-(pentapeptide) pyrophosphoryl-undecaprenol N-acetylglucosamine transferase</fullName>
        <ecNumber evidence="1">2.4.1.227</ecNumber>
    </recommendedName>
    <alternativeName>
        <fullName evidence="1">Undecaprenyl-PP-MurNAc-pentapeptide-UDPGlcNAc GlcNAc transferase</fullName>
    </alternativeName>
</protein>
<evidence type="ECO:0000255" key="1">
    <source>
        <dbReference type="HAMAP-Rule" id="MF_00033"/>
    </source>
</evidence>
<sequence length="353" mass="39417">MKVALTGGGTGGHLSIAKALAIELEKQGVEAIYLGSTYGQDKEWFEDSPLFSECYFFNTQGVVNKSFFKKIGSLFLQAKAALKAKEILKKHQITHTISVGGFSAGPASFASLLNKIPLYIHEQNAIKGSLNRYLSPKAKAVFSSYAFKDKGNHIVTSYPVQNVFFDHARTRTEIKHILFIGGSQGAKAINEFALFNAPKLTKQGIEITHICGPNSYERVRFFYQELGLLDKIVLFAFHNNIIEVMQKADLCVSRAGASSVWELCANGLPTIFIPYPFASNNHQYHNVLEFEKENLCYVVPQNELLPKKLFEVIRKLNQKDEQGHKNLTIISNKLQQKIAKDGAKTIIERILSA</sequence>
<gene>
    <name evidence="1" type="primary">murG</name>
    <name type="ordered locus">Hac_1322</name>
</gene>
<dbReference type="EC" id="2.4.1.227" evidence="1"/>
<dbReference type="EMBL" id="AM260522">
    <property type="protein sequence ID" value="CAK00061.1"/>
    <property type="molecule type" value="Genomic_DNA"/>
</dbReference>
<dbReference type="RefSeq" id="WP_011578151.1">
    <property type="nucleotide sequence ID" value="NC_008229.1"/>
</dbReference>
<dbReference type="SMR" id="Q17WB5"/>
<dbReference type="STRING" id="382638.Hac_1322"/>
<dbReference type="CAZy" id="GT28">
    <property type="family name" value="Glycosyltransferase Family 28"/>
</dbReference>
<dbReference type="GeneID" id="31758643"/>
<dbReference type="KEGG" id="hac:Hac_1322"/>
<dbReference type="eggNOG" id="COG0707">
    <property type="taxonomic scope" value="Bacteria"/>
</dbReference>
<dbReference type="HOGENOM" id="CLU_037404_2_1_7"/>
<dbReference type="OrthoDB" id="9808936at2"/>
<dbReference type="BioCyc" id="HACI382638:HAC_RS05675-MONOMER"/>
<dbReference type="UniPathway" id="UPA00219"/>
<dbReference type="Proteomes" id="UP000000775">
    <property type="component" value="Chromosome"/>
</dbReference>
<dbReference type="GO" id="GO:0005886">
    <property type="term" value="C:plasma membrane"/>
    <property type="evidence" value="ECO:0007669"/>
    <property type="project" value="UniProtKB-SubCell"/>
</dbReference>
<dbReference type="GO" id="GO:0051991">
    <property type="term" value="F:UDP-N-acetyl-D-glucosamine:N-acetylmuramoyl-L-alanyl-D-glutamyl-meso-2,6-diaminopimelyl-D-alanyl-D-alanine-diphosphoundecaprenol 4-beta-N-acetylglucosaminlytransferase activity"/>
    <property type="evidence" value="ECO:0007669"/>
    <property type="project" value="RHEA"/>
</dbReference>
<dbReference type="GO" id="GO:0050511">
    <property type="term" value="F:undecaprenyldiphospho-muramoylpentapeptide beta-N-acetylglucosaminyltransferase activity"/>
    <property type="evidence" value="ECO:0007669"/>
    <property type="project" value="UniProtKB-UniRule"/>
</dbReference>
<dbReference type="GO" id="GO:0005975">
    <property type="term" value="P:carbohydrate metabolic process"/>
    <property type="evidence" value="ECO:0007669"/>
    <property type="project" value="InterPro"/>
</dbReference>
<dbReference type="GO" id="GO:0051301">
    <property type="term" value="P:cell division"/>
    <property type="evidence" value="ECO:0007669"/>
    <property type="project" value="UniProtKB-KW"/>
</dbReference>
<dbReference type="GO" id="GO:0071555">
    <property type="term" value="P:cell wall organization"/>
    <property type="evidence" value="ECO:0007669"/>
    <property type="project" value="UniProtKB-KW"/>
</dbReference>
<dbReference type="GO" id="GO:0030259">
    <property type="term" value="P:lipid glycosylation"/>
    <property type="evidence" value="ECO:0007669"/>
    <property type="project" value="UniProtKB-UniRule"/>
</dbReference>
<dbReference type="GO" id="GO:0009252">
    <property type="term" value="P:peptidoglycan biosynthetic process"/>
    <property type="evidence" value="ECO:0007669"/>
    <property type="project" value="UniProtKB-UniRule"/>
</dbReference>
<dbReference type="GO" id="GO:0008360">
    <property type="term" value="P:regulation of cell shape"/>
    <property type="evidence" value="ECO:0007669"/>
    <property type="project" value="UniProtKB-KW"/>
</dbReference>
<dbReference type="CDD" id="cd03785">
    <property type="entry name" value="GT28_MurG"/>
    <property type="match status" value="1"/>
</dbReference>
<dbReference type="Gene3D" id="3.40.50.2000">
    <property type="entry name" value="Glycogen Phosphorylase B"/>
    <property type="match status" value="2"/>
</dbReference>
<dbReference type="HAMAP" id="MF_00033">
    <property type="entry name" value="MurG"/>
    <property type="match status" value="1"/>
</dbReference>
<dbReference type="InterPro" id="IPR006009">
    <property type="entry name" value="GlcNAc_MurG"/>
</dbReference>
<dbReference type="InterPro" id="IPR007235">
    <property type="entry name" value="Glyco_trans_28_C"/>
</dbReference>
<dbReference type="InterPro" id="IPR004276">
    <property type="entry name" value="GlycoTrans_28_N"/>
</dbReference>
<dbReference type="NCBIfam" id="TIGR01133">
    <property type="entry name" value="murG"/>
    <property type="match status" value="1"/>
</dbReference>
<dbReference type="PANTHER" id="PTHR21015:SF22">
    <property type="entry name" value="GLYCOSYLTRANSFERASE"/>
    <property type="match status" value="1"/>
</dbReference>
<dbReference type="PANTHER" id="PTHR21015">
    <property type="entry name" value="UDP-N-ACETYLGLUCOSAMINE--N-ACETYLMURAMYL-(PENTAPEPTIDE) PYROPHOSPHORYL-UNDECAPRENOL N-ACETYLGLUCOSAMINE TRANSFERASE 1"/>
    <property type="match status" value="1"/>
</dbReference>
<dbReference type="Pfam" id="PF04101">
    <property type="entry name" value="Glyco_tran_28_C"/>
    <property type="match status" value="1"/>
</dbReference>
<dbReference type="Pfam" id="PF03033">
    <property type="entry name" value="Glyco_transf_28"/>
    <property type="match status" value="1"/>
</dbReference>
<dbReference type="SUPFAM" id="SSF53756">
    <property type="entry name" value="UDP-Glycosyltransferase/glycogen phosphorylase"/>
    <property type="match status" value="1"/>
</dbReference>
<proteinExistence type="inferred from homology"/>
<name>MURG_HELAH</name>
<reference key="1">
    <citation type="journal article" date="2006" name="PLoS Genet.">
        <title>Who ate whom? Adaptive Helicobacter genomic changes that accompanied a host jump from early humans to large felines.</title>
        <authorList>
            <person name="Eppinger M."/>
            <person name="Baar C."/>
            <person name="Linz B."/>
            <person name="Raddatz G."/>
            <person name="Lanz C."/>
            <person name="Keller H."/>
            <person name="Morelli G."/>
            <person name="Gressmann H."/>
            <person name="Achtman M."/>
            <person name="Schuster S.C."/>
        </authorList>
    </citation>
    <scope>NUCLEOTIDE SEQUENCE [LARGE SCALE GENOMIC DNA]</scope>
    <source>
        <strain>Sheeba</strain>
    </source>
</reference>